<keyword id="KW-0004">4Fe-4S</keyword>
<keyword id="KW-0408">Iron</keyword>
<keyword id="KW-0411">Iron-sulfur</keyword>
<keyword id="KW-0479">Metal-binding</keyword>
<feature type="chain" id="PRO_0000209490" description="Fe/S biogenesis protein NfuA">
    <location>
        <begin position="1"/>
        <end position="199"/>
    </location>
</feature>
<feature type="binding site" evidence="1">
    <location>
        <position position="151"/>
    </location>
    <ligand>
        <name>[4Fe-4S] cluster</name>
        <dbReference type="ChEBI" id="CHEBI:49883"/>
    </ligand>
</feature>
<feature type="binding site" evidence="1">
    <location>
        <position position="154"/>
    </location>
    <ligand>
        <name>[4Fe-4S] cluster</name>
        <dbReference type="ChEBI" id="CHEBI:49883"/>
    </ligand>
</feature>
<accession>Q8PKQ2</accession>
<name>NFUA_XANAC</name>
<gene>
    <name evidence="1" type="primary">nfuA</name>
    <name type="ordered locus">XAC2117</name>
</gene>
<comment type="function">
    <text evidence="1">Involved in iron-sulfur cluster biogenesis. Binds a 4Fe-4S cluster, can transfer this cluster to apoproteins, and thereby intervenes in the maturation of Fe/S proteins. Could also act as a scaffold/chaperone for damaged Fe/S proteins.</text>
</comment>
<comment type="cofactor">
    <cofactor evidence="1">
        <name>[4Fe-4S] cluster</name>
        <dbReference type="ChEBI" id="CHEBI:49883"/>
    </cofactor>
    <text evidence="1">Binds 1 [4Fe-4S] cluster per subunit. The cluster is presumably bound at the interface of two monomers.</text>
</comment>
<comment type="subunit">
    <text evidence="1">Homodimer.</text>
</comment>
<comment type="similarity">
    <text evidence="1">Belongs to the NfuA family.</text>
</comment>
<organism>
    <name type="scientific">Xanthomonas axonopodis pv. citri (strain 306)</name>
    <dbReference type="NCBI Taxonomy" id="190486"/>
    <lineage>
        <taxon>Bacteria</taxon>
        <taxon>Pseudomonadati</taxon>
        <taxon>Pseudomonadota</taxon>
        <taxon>Gammaproteobacteria</taxon>
        <taxon>Lysobacterales</taxon>
        <taxon>Lysobacteraceae</taxon>
        <taxon>Xanthomonas</taxon>
    </lineage>
</organism>
<protein>
    <recommendedName>
        <fullName evidence="1">Fe/S biogenesis protein NfuA</fullName>
    </recommendedName>
</protein>
<reference key="1">
    <citation type="journal article" date="2002" name="Nature">
        <title>Comparison of the genomes of two Xanthomonas pathogens with differing host specificities.</title>
        <authorList>
            <person name="da Silva A.C.R."/>
            <person name="Ferro J.A."/>
            <person name="Reinach F.C."/>
            <person name="Farah C.S."/>
            <person name="Furlan L.R."/>
            <person name="Quaggio R.B."/>
            <person name="Monteiro-Vitorello C.B."/>
            <person name="Van Sluys M.A."/>
            <person name="Almeida N.F. Jr."/>
            <person name="Alves L.M.C."/>
            <person name="do Amaral A.M."/>
            <person name="Bertolini M.C."/>
            <person name="Camargo L.E.A."/>
            <person name="Camarotte G."/>
            <person name="Cannavan F."/>
            <person name="Cardozo J."/>
            <person name="Chambergo F."/>
            <person name="Ciapina L.P."/>
            <person name="Cicarelli R.M.B."/>
            <person name="Coutinho L.L."/>
            <person name="Cursino-Santos J.R."/>
            <person name="El-Dorry H."/>
            <person name="Faria J.B."/>
            <person name="Ferreira A.J.S."/>
            <person name="Ferreira R.C.C."/>
            <person name="Ferro M.I.T."/>
            <person name="Formighieri E.F."/>
            <person name="Franco M.C."/>
            <person name="Greggio C.C."/>
            <person name="Gruber A."/>
            <person name="Katsuyama A.M."/>
            <person name="Kishi L.T."/>
            <person name="Leite R.P."/>
            <person name="Lemos E.G.M."/>
            <person name="Lemos M.V.F."/>
            <person name="Locali E.C."/>
            <person name="Machado M.A."/>
            <person name="Madeira A.M.B.N."/>
            <person name="Martinez-Rossi N.M."/>
            <person name="Martins E.C."/>
            <person name="Meidanis J."/>
            <person name="Menck C.F.M."/>
            <person name="Miyaki C.Y."/>
            <person name="Moon D.H."/>
            <person name="Moreira L.M."/>
            <person name="Novo M.T.M."/>
            <person name="Okura V.K."/>
            <person name="Oliveira M.C."/>
            <person name="Oliveira V.R."/>
            <person name="Pereira H.A."/>
            <person name="Rossi A."/>
            <person name="Sena J.A.D."/>
            <person name="Silva C."/>
            <person name="de Souza R.F."/>
            <person name="Spinola L.A.F."/>
            <person name="Takita M.A."/>
            <person name="Tamura R.E."/>
            <person name="Teixeira E.C."/>
            <person name="Tezza R.I.D."/>
            <person name="Trindade dos Santos M."/>
            <person name="Truffi D."/>
            <person name="Tsai S.M."/>
            <person name="White F.F."/>
            <person name="Setubal J.C."/>
            <person name="Kitajima J.P."/>
        </authorList>
    </citation>
    <scope>NUCLEOTIDE SEQUENCE [LARGE SCALE GENOMIC DNA]</scope>
    <source>
        <strain>306</strain>
    </source>
</reference>
<dbReference type="EMBL" id="AE008923">
    <property type="protein sequence ID" value="AAM36970.1"/>
    <property type="molecule type" value="Genomic_DNA"/>
</dbReference>
<dbReference type="RefSeq" id="WP_003489210.1">
    <property type="nucleotide sequence ID" value="NC_003919.1"/>
</dbReference>
<dbReference type="SMR" id="Q8PKQ2"/>
<dbReference type="KEGG" id="xac:XAC2117"/>
<dbReference type="eggNOG" id="COG0316">
    <property type="taxonomic scope" value="Bacteria"/>
</dbReference>
<dbReference type="eggNOG" id="COG0694">
    <property type="taxonomic scope" value="Bacteria"/>
</dbReference>
<dbReference type="HOGENOM" id="CLU_094569_0_0_6"/>
<dbReference type="Proteomes" id="UP000000576">
    <property type="component" value="Chromosome"/>
</dbReference>
<dbReference type="GO" id="GO:0051539">
    <property type="term" value="F:4 iron, 4 sulfur cluster binding"/>
    <property type="evidence" value="ECO:0007669"/>
    <property type="project" value="UniProtKB-UniRule"/>
</dbReference>
<dbReference type="GO" id="GO:0005506">
    <property type="term" value="F:iron ion binding"/>
    <property type="evidence" value="ECO:0007669"/>
    <property type="project" value="InterPro"/>
</dbReference>
<dbReference type="GO" id="GO:0016226">
    <property type="term" value="P:iron-sulfur cluster assembly"/>
    <property type="evidence" value="ECO:0007669"/>
    <property type="project" value="UniProtKB-UniRule"/>
</dbReference>
<dbReference type="GO" id="GO:0051604">
    <property type="term" value="P:protein maturation"/>
    <property type="evidence" value="ECO:0007669"/>
    <property type="project" value="UniProtKB-UniRule"/>
</dbReference>
<dbReference type="Gene3D" id="3.30.300.130">
    <property type="entry name" value="Fe-S cluster assembly (FSCA)"/>
    <property type="match status" value="1"/>
</dbReference>
<dbReference type="Gene3D" id="2.60.300.12">
    <property type="entry name" value="HesB-like domain"/>
    <property type="match status" value="1"/>
</dbReference>
<dbReference type="HAMAP" id="MF_01637">
    <property type="entry name" value="Fe_S_biogen_NfuA"/>
    <property type="match status" value="1"/>
</dbReference>
<dbReference type="InterPro" id="IPR017726">
    <property type="entry name" value="Fe/S_biogenesis_protein_NfuA"/>
</dbReference>
<dbReference type="InterPro" id="IPR034904">
    <property type="entry name" value="FSCA_dom_sf"/>
</dbReference>
<dbReference type="InterPro" id="IPR035903">
    <property type="entry name" value="HesB-like_dom_sf"/>
</dbReference>
<dbReference type="InterPro" id="IPR001075">
    <property type="entry name" value="NIF_FeS_clus_asmbl_NifU_C"/>
</dbReference>
<dbReference type="PANTHER" id="PTHR11178:SF51">
    <property type="entry name" value="FE_S BIOGENESIS PROTEIN NFUA"/>
    <property type="match status" value="1"/>
</dbReference>
<dbReference type="PANTHER" id="PTHR11178">
    <property type="entry name" value="IRON-SULFUR CLUSTER SCAFFOLD PROTEIN NFU-RELATED"/>
    <property type="match status" value="1"/>
</dbReference>
<dbReference type="Pfam" id="PF01106">
    <property type="entry name" value="NifU"/>
    <property type="match status" value="1"/>
</dbReference>
<dbReference type="SUPFAM" id="SSF117916">
    <property type="entry name" value="Fe-S cluster assembly (FSCA) domain-like"/>
    <property type="match status" value="1"/>
</dbReference>
<dbReference type="SUPFAM" id="SSF89360">
    <property type="entry name" value="HesB-like domain"/>
    <property type="match status" value="1"/>
</dbReference>
<evidence type="ECO:0000255" key="1">
    <source>
        <dbReference type="HAMAP-Rule" id="MF_01637"/>
    </source>
</evidence>
<sequence>MIQISDKAQTYFRKLIEREGVPGMGVRLSAVDAGTPRADARLEFAEPADLSGDEWAIDCDGFTLYVVAASVPWMDGAEIDYVTQSTGNQQLTIKAPKIKGEAPAESASMVERVRWVVENEINPQLASHGGRVAVQEVSAEGVVLLRFGGGCHGCGMADVTLKQGIEKTLMGRVPGVTAVRDATDHATGDAPYIPRDSAA</sequence>
<proteinExistence type="inferred from homology"/>